<dbReference type="EMBL" id="AE016879">
    <property type="protein sequence ID" value="AAP25030.1"/>
    <property type="molecule type" value="Genomic_DNA"/>
</dbReference>
<dbReference type="EMBL" id="AE017334">
    <property type="protein sequence ID" value="AAT30145.1"/>
    <property type="molecule type" value="Genomic_DNA"/>
</dbReference>
<dbReference type="EMBL" id="AE017225">
    <property type="protein sequence ID" value="AAT53300.1"/>
    <property type="molecule type" value="Genomic_DNA"/>
</dbReference>
<dbReference type="RefSeq" id="NP_843544.1">
    <property type="nucleotide sequence ID" value="NC_003997.3"/>
</dbReference>
<dbReference type="RefSeq" id="WP_000834918.1">
    <property type="nucleotide sequence ID" value="NZ_WXXJ01000044.1"/>
</dbReference>
<dbReference type="RefSeq" id="YP_027249.1">
    <property type="nucleotide sequence ID" value="NC_005945.1"/>
</dbReference>
<dbReference type="SMR" id="Q81JG1"/>
<dbReference type="IntAct" id="Q81JG1">
    <property type="interactions" value="1"/>
</dbReference>
<dbReference type="STRING" id="261594.GBAA_1045"/>
<dbReference type="DNASU" id="1088195"/>
<dbReference type="KEGG" id="ban:BA_1045"/>
<dbReference type="KEGG" id="bar:GBAA_1045"/>
<dbReference type="KEGG" id="bat:BAS0976"/>
<dbReference type="PATRIC" id="fig|198094.11.peg.1034"/>
<dbReference type="eggNOG" id="COG1846">
    <property type="taxonomic scope" value="Bacteria"/>
</dbReference>
<dbReference type="HOGENOM" id="CLU_115790_0_0_9"/>
<dbReference type="OMA" id="EKDWQNW"/>
<dbReference type="OrthoDB" id="2393954at2"/>
<dbReference type="Proteomes" id="UP000000427">
    <property type="component" value="Chromosome"/>
</dbReference>
<dbReference type="Proteomes" id="UP000000594">
    <property type="component" value="Chromosome"/>
</dbReference>
<dbReference type="GO" id="GO:0003677">
    <property type="term" value="F:DNA binding"/>
    <property type="evidence" value="ECO:0007669"/>
    <property type="project" value="UniProtKB-UniRule"/>
</dbReference>
<dbReference type="GO" id="GO:0003700">
    <property type="term" value="F:DNA-binding transcription factor activity"/>
    <property type="evidence" value="ECO:0007669"/>
    <property type="project" value="UniProtKB-UniRule"/>
</dbReference>
<dbReference type="GO" id="GO:0045892">
    <property type="term" value="P:negative regulation of DNA-templated transcription"/>
    <property type="evidence" value="ECO:0007669"/>
    <property type="project" value="UniProtKB-UniRule"/>
</dbReference>
<dbReference type="GO" id="GO:0006950">
    <property type="term" value="P:response to stress"/>
    <property type="evidence" value="ECO:0007669"/>
    <property type="project" value="TreeGrafter"/>
</dbReference>
<dbReference type="GO" id="GO:0030435">
    <property type="term" value="P:sporulation resulting in formation of a cellular spore"/>
    <property type="evidence" value="ECO:0007669"/>
    <property type="project" value="UniProtKB-UniRule"/>
</dbReference>
<dbReference type="FunFam" id="1.10.10.10:FF:000194">
    <property type="entry name" value="HTH-type transcriptional regulator Hpr"/>
    <property type="match status" value="1"/>
</dbReference>
<dbReference type="Gene3D" id="1.10.10.10">
    <property type="entry name" value="Winged helix-like DNA-binding domain superfamily/Winged helix DNA-binding domain"/>
    <property type="match status" value="1"/>
</dbReference>
<dbReference type="HAMAP" id="MF_01911">
    <property type="entry name" value="HTH_type_Hpr"/>
    <property type="match status" value="1"/>
</dbReference>
<dbReference type="InterPro" id="IPR000835">
    <property type="entry name" value="HTH_MarR-typ"/>
</dbReference>
<dbReference type="InterPro" id="IPR023488">
    <property type="entry name" value="HTH_tscrpt_reg_Hpr"/>
</dbReference>
<dbReference type="InterPro" id="IPR039422">
    <property type="entry name" value="MarR/SlyA-like"/>
</dbReference>
<dbReference type="InterPro" id="IPR023187">
    <property type="entry name" value="Tscrpt_reg_MarR-type_CS"/>
</dbReference>
<dbReference type="InterPro" id="IPR036388">
    <property type="entry name" value="WH-like_DNA-bd_sf"/>
</dbReference>
<dbReference type="InterPro" id="IPR036390">
    <property type="entry name" value="WH_DNA-bd_sf"/>
</dbReference>
<dbReference type="NCBIfam" id="NF010349">
    <property type="entry name" value="PRK13777.1"/>
    <property type="match status" value="1"/>
</dbReference>
<dbReference type="PANTHER" id="PTHR33164:SF58">
    <property type="entry name" value="DNA-BINDING TRANSCRIPTIONAL REPRESSOR SCOC"/>
    <property type="match status" value="1"/>
</dbReference>
<dbReference type="PANTHER" id="PTHR33164">
    <property type="entry name" value="TRANSCRIPTIONAL REGULATOR, MARR FAMILY"/>
    <property type="match status" value="1"/>
</dbReference>
<dbReference type="Pfam" id="PF01047">
    <property type="entry name" value="MarR"/>
    <property type="match status" value="1"/>
</dbReference>
<dbReference type="SMART" id="SM00347">
    <property type="entry name" value="HTH_MARR"/>
    <property type="match status" value="1"/>
</dbReference>
<dbReference type="SUPFAM" id="SSF46785">
    <property type="entry name" value="Winged helix' DNA-binding domain"/>
    <property type="match status" value="1"/>
</dbReference>
<dbReference type="PROSITE" id="PS01117">
    <property type="entry name" value="HTH_MARR_1"/>
    <property type="match status" value="1"/>
</dbReference>
<dbReference type="PROSITE" id="PS50995">
    <property type="entry name" value="HTH_MARR_2"/>
    <property type="match status" value="1"/>
</dbReference>
<proteinExistence type="inferred from homology"/>
<gene>
    <name evidence="1" type="primary">hpr</name>
    <name type="ordered locus">BA_1045</name>
    <name type="ordered locus">GBAA_1045</name>
    <name type="ordered locus">BAS0976</name>
</gene>
<evidence type="ECO:0000255" key="1">
    <source>
        <dbReference type="HAMAP-Rule" id="MF_01911"/>
    </source>
</evidence>
<name>HPR_BACAN</name>
<keyword id="KW-0238">DNA-binding</keyword>
<keyword id="KW-1185">Reference proteome</keyword>
<keyword id="KW-0678">Repressor</keyword>
<keyword id="KW-0749">Sporulation</keyword>
<keyword id="KW-0804">Transcription</keyword>
<keyword id="KW-0805">Transcription regulation</keyword>
<reference key="1">
    <citation type="journal article" date="2003" name="Nature">
        <title>The genome sequence of Bacillus anthracis Ames and comparison to closely related bacteria.</title>
        <authorList>
            <person name="Read T.D."/>
            <person name="Peterson S.N."/>
            <person name="Tourasse N.J."/>
            <person name="Baillie L.W."/>
            <person name="Paulsen I.T."/>
            <person name="Nelson K.E."/>
            <person name="Tettelin H."/>
            <person name="Fouts D.E."/>
            <person name="Eisen J.A."/>
            <person name="Gill S.R."/>
            <person name="Holtzapple E.K."/>
            <person name="Okstad O.A."/>
            <person name="Helgason E."/>
            <person name="Rilstone J."/>
            <person name="Wu M."/>
            <person name="Kolonay J.F."/>
            <person name="Beanan M.J."/>
            <person name="Dodson R.J."/>
            <person name="Brinkac L.M."/>
            <person name="Gwinn M.L."/>
            <person name="DeBoy R.T."/>
            <person name="Madpu R."/>
            <person name="Daugherty S.C."/>
            <person name="Durkin A.S."/>
            <person name="Haft D.H."/>
            <person name="Nelson W.C."/>
            <person name="Peterson J.D."/>
            <person name="Pop M."/>
            <person name="Khouri H.M."/>
            <person name="Radune D."/>
            <person name="Benton J.L."/>
            <person name="Mahamoud Y."/>
            <person name="Jiang L."/>
            <person name="Hance I.R."/>
            <person name="Weidman J.F."/>
            <person name="Berry K.J."/>
            <person name="Plaut R.D."/>
            <person name="Wolf A.M."/>
            <person name="Watkins K.L."/>
            <person name="Nierman W.C."/>
            <person name="Hazen A."/>
            <person name="Cline R.T."/>
            <person name="Redmond C."/>
            <person name="Thwaite J.E."/>
            <person name="White O."/>
            <person name="Salzberg S.L."/>
            <person name="Thomason B."/>
            <person name="Friedlander A.M."/>
            <person name="Koehler T.M."/>
            <person name="Hanna P.C."/>
            <person name="Kolstoe A.-B."/>
            <person name="Fraser C.M."/>
        </authorList>
    </citation>
    <scope>NUCLEOTIDE SEQUENCE [LARGE SCALE GENOMIC DNA]</scope>
    <source>
        <strain>Ames / isolate Porton</strain>
    </source>
</reference>
<reference key="2">
    <citation type="submission" date="2004-01" db="EMBL/GenBank/DDBJ databases">
        <title>Complete genome sequence of Bacillus anthracis Sterne.</title>
        <authorList>
            <person name="Brettin T.S."/>
            <person name="Bruce D."/>
            <person name="Challacombe J.F."/>
            <person name="Gilna P."/>
            <person name="Han C."/>
            <person name="Hill K."/>
            <person name="Hitchcock P."/>
            <person name="Jackson P."/>
            <person name="Keim P."/>
            <person name="Longmire J."/>
            <person name="Lucas S."/>
            <person name="Okinaka R."/>
            <person name="Richardson P."/>
            <person name="Rubin E."/>
            <person name="Tice H."/>
        </authorList>
    </citation>
    <scope>NUCLEOTIDE SEQUENCE [LARGE SCALE GENOMIC DNA]</scope>
    <source>
        <strain>Sterne</strain>
    </source>
</reference>
<reference key="3">
    <citation type="journal article" date="2009" name="J. Bacteriol.">
        <title>The complete genome sequence of Bacillus anthracis Ames 'Ancestor'.</title>
        <authorList>
            <person name="Ravel J."/>
            <person name="Jiang L."/>
            <person name="Stanley S.T."/>
            <person name="Wilson M.R."/>
            <person name="Decker R.S."/>
            <person name="Read T.D."/>
            <person name="Worsham P."/>
            <person name="Keim P.S."/>
            <person name="Salzberg S.L."/>
            <person name="Fraser-Liggett C.M."/>
            <person name="Rasko D.A."/>
        </authorList>
    </citation>
    <scope>NUCLEOTIDE SEQUENCE [LARGE SCALE GENOMIC DNA]</scope>
    <source>
        <strain>Ames ancestor</strain>
    </source>
</reference>
<comment type="function">
    <text evidence="1">Negative regulator of protease production and sporulation.</text>
</comment>
<comment type="subunit">
    <text evidence="1">Homodimer.</text>
</comment>
<accession>Q81JG1</accession>
<accession>Q6I2D1</accession>
<accession>Q6KW58</accession>
<feature type="chain" id="PRO_0000343617" description="HTH-type transcriptional regulator Hpr">
    <location>
        <begin position="1"/>
        <end position="185"/>
    </location>
</feature>
<feature type="domain" description="HTH marR-type" evidence="1">
    <location>
        <begin position="13"/>
        <end position="157"/>
    </location>
</feature>
<feature type="DNA-binding region" description="H-T-H motif" evidence="1">
    <location>
        <begin position="63"/>
        <end position="86"/>
    </location>
</feature>
<protein>
    <recommendedName>
        <fullName evidence="1">HTH-type transcriptional regulator Hpr</fullName>
    </recommendedName>
    <alternativeName>
        <fullName evidence="1">Protease production regulatory protein Hpr</fullName>
    </alternativeName>
</protein>
<sequence>MKSGEKDYSVKEAMIFSQRIAQLSKALWKCVEKDWQMWIKPYDLNINEHHILTIAYHLKGASISEIAKFGVMHVSTAFNFSKKLEERGYLVFSKKEDDKRNTYIEITDKGEELLLRLMEEYDPENNSVFNGALALRNFYGKFPENIELIAILRNIYGQDFIDIFEKSLEDIEENFTESDQKLVKK</sequence>
<organism>
    <name type="scientific">Bacillus anthracis</name>
    <dbReference type="NCBI Taxonomy" id="1392"/>
    <lineage>
        <taxon>Bacteria</taxon>
        <taxon>Bacillati</taxon>
        <taxon>Bacillota</taxon>
        <taxon>Bacilli</taxon>
        <taxon>Bacillales</taxon>
        <taxon>Bacillaceae</taxon>
        <taxon>Bacillus</taxon>
        <taxon>Bacillus cereus group</taxon>
    </lineage>
</organism>